<feature type="chain" id="PRO_0000132019" description="Cytidylate kinase">
    <location>
        <begin position="1"/>
        <end position="184"/>
    </location>
</feature>
<feature type="binding site" evidence="1">
    <location>
        <begin position="8"/>
        <end position="16"/>
    </location>
    <ligand>
        <name>ATP</name>
        <dbReference type="ChEBI" id="CHEBI:30616"/>
    </ligand>
</feature>
<comment type="catalytic activity">
    <reaction evidence="1">
        <text>CMP + ATP = CDP + ADP</text>
        <dbReference type="Rhea" id="RHEA:11600"/>
        <dbReference type="ChEBI" id="CHEBI:30616"/>
        <dbReference type="ChEBI" id="CHEBI:58069"/>
        <dbReference type="ChEBI" id="CHEBI:60377"/>
        <dbReference type="ChEBI" id="CHEBI:456216"/>
        <dbReference type="EC" id="2.7.4.25"/>
    </reaction>
</comment>
<comment type="catalytic activity">
    <reaction evidence="1">
        <text>dCMP + ATP = dCDP + ADP</text>
        <dbReference type="Rhea" id="RHEA:25094"/>
        <dbReference type="ChEBI" id="CHEBI:30616"/>
        <dbReference type="ChEBI" id="CHEBI:57566"/>
        <dbReference type="ChEBI" id="CHEBI:58593"/>
        <dbReference type="ChEBI" id="CHEBI:456216"/>
        <dbReference type="EC" id="2.7.4.25"/>
    </reaction>
</comment>
<comment type="subcellular location">
    <subcellularLocation>
        <location evidence="1">Cytoplasm</location>
    </subcellularLocation>
</comment>
<comment type="similarity">
    <text evidence="1">Belongs to the cytidylate kinase family. Type 2 subfamily.</text>
</comment>
<gene>
    <name evidence="1" type="primary">cmk</name>
    <name type="ordered locus">PAE3225</name>
</gene>
<dbReference type="EC" id="2.7.4.25" evidence="1"/>
<dbReference type="EMBL" id="AE009441">
    <property type="protein sequence ID" value="AAL64770.1"/>
    <property type="molecule type" value="Genomic_DNA"/>
</dbReference>
<dbReference type="RefSeq" id="WP_011009238.1">
    <property type="nucleotide sequence ID" value="NC_003364.1"/>
</dbReference>
<dbReference type="SMR" id="Q8ZTJ1"/>
<dbReference type="FunCoup" id="Q8ZTJ1">
    <property type="interactions" value="16"/>
</dbReference>
<dbReference type="STRING" id="178306.PAE3225"/>
<dbReference type="EnsemblBacteria" id="AAL64770">
    <property type="protein sequence ID" value="AAL64770"/>
    <property type="gene ID" value="PAE3225"/>
</dbReference>
<dbReference type="GeneID" id="1463953"/>
<dbReference type="KEGG" id="pai:PAE3225"/>
<dbReference type="PATRIC" id="fig|178306.9.peg.2429"/>
<dbReference type="eggNOG" id="arCOG01037">
    <property type="taxonomic scope" value="Archaea"/>
</dbReference>
<dbReference type="HOGENOM" id="CLU_079959_1_0_2"/>
<dbReference type="InParanoid" id="Q8ZTJ1"/>
<dbReference type="Proteomes" id="UP000002439">
    <property type="component" value="Chromosome"/>
</dbReference>
<dbReference type="GO" id="GO:0005737">
    <property type="term" value="C:cytoplasm"/>
    <property type="evidence" value="ECO:0007669"/>
    <property type="project" value="UniProtKB-SubCell"/>
</dbReference>
<dbReference type="GO" id="GO:0005524">
    <property type="term" value="F:ATP binding"/>
    <property type="evidence" value="ECO:0007669"/>
    <property type="project" value="UniProtKB-UniRule"/>
</dbReference>
<dbReference type="GO" id="GO:0036430">
    <property type="term" value="F:CMP kinase activity"/>
    <property type="evidence" value="ECO:0007669"/>
    <property type="project" value="RHEA"/>
</dbReference>
<dbReference type="GO" id="GO:0036431">
    <property type="term" value="F:dCMP kinase activity"/>
    <property type="evidence" value="ECO:0007669"/>
    <property type="project" value="RHEA"/>
</dbReference>
<dbReference type="GO" id="GO:0006220">
    <property type="term" value="P:pyrimidine nucleotide metabolic process"/>
    <property type="evidence" value="ECO:0007669"/>
    <property type="project" value="UniProtKB-UniRule"/>
</dbReference>
<dbReference type="CDD" id="cd02020">
    <property type="entry name" value="CMPK"/>
    <property type="match status" value="1"/>
</dbReference>
<dbReference type="Gene3D" id="3.40.50.300">
    <property type="entry name" value="P-loop containing nucleotide triphosphate hydrolases"/>
    <property type="match status" value="1"/>
</dbReference>
<dbReference type="HAMAP" id="MF_00239">
    <property type="entry name" value="Cytidyl_kinase_type2"/>
    <property type="match status" value="1"/>
</dbReference>
<dbReference type="InterPro" id="IPR011892">
    <property type="entry name" value="Cyt_kin_arch"/>
</dbReference>
<dbReference type="InterPro" id="IPR011994">
    <property type="entry name" value="Cytidylate_kinase_dom"/>
</dbReference>
<dbReference type="InterPro" id="IPR027417">
    <property type="entry name" value="P-loop_NTPase"/>
</dbReference>
<dbReference type="NCBIfam" id="TIGR02173">
    <property type="entry name" value="cyt_kin_arch"/>
    <property type="match status" value="1"/>
</dbReference>
<dbReference type="Pfam" id="PF13207">
    <property type="entry name" value="AAA_17"/>
    <property type="match status" value="1"/>
</dbReference>
<dbReference type="SUPFAM" id="SSF52540">
    <property type="entry name" value="P-loop containing nucleoside triphosphate hydrolases"/>
    <property type="match status" value="1"/>
</dbReference>
<keyword id="KW-0067">ATP-binding</keyword>
<keyword id="KW-0963">Cytoplasm</keyword>
<keyword id="KW-0418">Kinase</keyword>
<keyword id="KW-0547">Nucleotide-binding</keyword>
<keyword id="KW-1185">Reference proteome</keyword>
<keyword id="KW-0808">Transferase</keyword>
<proteinExistence type="inferred from homology"/>
<reference key="1">
    <citation type="journal article" date="2002" name="Proc. Natl. Acad. Sci. U.S.A.">
        <title>Genome sequence of the hyperthermophilic crenarchaeon Pyrobaculum aerophilum.</title>
        <authorList>
            <person name="Fitz-Gibbon S.T."/>
            <person name="Ladner H."/>
            <person name="Kim U.-J."/>
            <person name="Stetter K.O."/>
            <person name="Simon M.I."/>
            <person name="Miller J.H."/>
        </authorList>
    </citation>
    <scope>NUCLEOTIDE SEQUENCE [LARGE SCALE GENOMIC DNA]</scope>
    <source>
        <strain>ATCC 51768 / DSM 7523 / JCM 9630 / CIP 104966 / NBRC 100827 / IM2</strain>
    </source>
</reference>
<evidence type="ECO:0000255" key="1">
    <source>
        <dbReference type="HAMAP-Rule" id="MF_00239"/>
    </source>
</evidence>
<name>KCY_PYRAE</name>
<accession>Q8ZTJ1</accession>
<protein>
    <recommendedName>
        <fullName evidence="1">Cytidylate kinase</fullName>
        <shortName evidence="1">CK</shortName>
        <ecNumber evidence="1">2.7.4.25</ecNumber>
    </recommendedName>
    <alternativeName>
        <fullName evidence="1">Cytidine monophosphate kinase</fullName>
        <shortName evidence="1">CMP kinase</shortName>
    </alternativeName>
</protein>
<sequence>MVVIAVSGQPGSGKTTIAREIARVLGLPLVSSGLLFREMAARMGMDFIEFHKYAETNPDIDKKVDSLAIERAKAGDVVLEGHLTAWIVRPYADVCIYLKASLETRARRVALRDGKSLQDALREVAEREELNRRRYLSIYGIDINDLSIFDLVLDTSHLSVNDAVRISLDYTCTSLSFKYSRKIC</sequence>
<organism>
    <name type="scientific">Pyrobaculum aerophilum (strain ATCC 51768 / DSM 7523 / JCM 9630 / CIP 104966 / NBRC 100827 / IM2)</name>
    <dbReference type="NCBI Taxonomy" id="178306"/>
    <lineage>
        <taxon>Archaea</taxon>
        <taxon>Thermoproteota</taxon>
        <taxon>Thermoprotei</taxon>
        <taxon>Thermoproteales</taxon>
        <taxon>Thermoproteaceae</taxon>
        <taxon>Pyrobaculum</taxon>
    </lineage>
</organism>